<accession>P28527</accession>
<comment type="function">
    <text evidence="1">The central subunit of the protein translocation channel SecYE. Consists of two halves formed by TMs 1-5 and 6-10. These two domains form a lateral gate at the front which open onto the bilayer between TMs 2 and 7, and are clamped together by SecE at the back. The channel is closed by both a pore ring composed of hydrophobic SecY resides and a short helix (helix 2A) on the extracellular side of the membrane which forms a plug (By similarity).</text>
</comment>
<comment type="subunit">
    <text evidence="1">Component of the plastid Sec protein translocase complex, which is composed of at least SecY, SecE and SecG.</text>
</comment>
<comment type="subcellular location">
    <subcellularLocation>
        <location evidence="1">Plastid</location>
        <location evidence="1">Chloroplast thylakoid membrane</location>
        <topology evidence="1">Multi-pass membrane protein</topology>
    </subcellularLocation>
</comment>
<comment type="similarity">
    <text evidence="3">Belongs to the SecY/SEC61-alpha family.</text>
</comment>
<reference key="1">
    <citation type="journal article" date="1992" name="FEBS Lett.">
        <title>A secY homologue is found in the plastid genome of Cryptomonas phi.</title>
        <authorList>
            <person name="Douglas S.E."/>
        </authorList>
    </citation>
    <scope>NUCLEOTIDE SEQUENCE [GENOMIC DNA]</scope>
</reference>
<reference key="2">
    <citation type="journal article" date="1997" name="Biochem. Mol. Biol. Int.">
        <title>The large ribosomal protein gene cluster of a cryptomonad plastid: gene organization, sequence and evolutionary implications.</title>
        <authorList>
            <person name="Wang S.L."/>
            <person name="Liu X.-Q."/>
            <person name="Douglas S.E."/>
        </authorList>
    </citation>
    <scope>NUCLEOTIDE SEQUENCE [GENOMIC DNA]</scope>
</reference>
<name>SECY_GUITH</name>
<feature type="chain" id="PRO_0000131775" description="Protein translocase subunit SecY">
    <location>
        <begin position="1"/>
        <end position="420"/>
    </location>
</feature>
<feature type="transmembrane region" description="Helical" evidence="2">
    <location>
        <begin position="17"/>
        <end position="37"/>
    </location>
</feature>
<feature type="transmembrane region" description="Helical" evidence="2">
    <location>
        <begin position="58"/>
        <end position="78"/>
    </location>
</feature>
<feature type="transmembrane region" description="Helical" evidence="2">
    <location>
        <begin position="117"/>
        <end position="137"/>
    </location>
</feature>
<feature type="transmembrane region" description="Helical" evidence="2">
    <location>
        <begin position="141"/>
        <end position="161"/>
    </location>
</feature>
<feature type="transmembrane region" description="Helical" evidence="2">
    <location>
        <begin position="170"/>
        <end position="190"/>
    </location>
</feature>
<feature type="transmembrane region" description="Helical" evidence="2">
    <location>
        <begin position="203"/>
        <end position="223"/>
    </location>
</feature>
<feature type="transmembrane region" description="Helical" evidence="2">
    <location>
        <begin position="259"/>
        <end position="279"/>
    </location>
</feature>
<feature type="transmembrane region" description="Helical" evidence="2">
    <location>
        <begin position="300"/>
        <end position="320"/>
    </location>
</feature>
<feature type="transmembrane region" description="Helical" evidence="2">
    <location>
        <begin position="357"/>
        <end position="377"/>
    </location>
</feature>
<feature type="transmembrane region" description="Helical" evidence="2">
    <location>
        <begin position="378"/>
        <end position="398"/>
    </location>
</feature>
<proteinExistence type="inferred from homology"/>
<dbReference type="EMBL" id="AF041468">
    <property type="protein sequence ID" value="AAC35720.1"/>
    <property type="molecule type" value="Genomic_DNA"/>
</dbReference>
<dbReference type="RefSeq" id="NP_050786.1">
    <property type="nucleotide sequence ID" value="NC_000926.1"/>
</dbReference>
<dbReference type="SMR" id="P28527"/>
<dbReference type="GeneID" id="857094"/>
<dbReference type="HOGENOM" id="CLU_030313_0_0_1"/>
<dbReference type="OMA" id="FAMWLGE"/>
<dbReference type="GO" id="GO:0009535">
    <property type="term" value="C:chloroplast thylakoid membrane"/>
    <property type="evidence" value="ECO:0007669"/>
    <property type="project" value="UniProtKB-SubCell"/>
</dbReference>
<dbReference type="GO" id="GO:0065002">
    <property type="term" value="P:intracellular protein transmembrane transport"/>
    <property type="evidence" value="ECO:0007669"/>
    <property type="project" value="UniProtKB-UniRule"/>
</dbReference>
<dbReference type="GO" id="GO:0006605">
    <property type="term" value="P:protein targeting"/>
    <property type="evidence" value="ECO:0007669"/>
    <property type="project" value="UniProtKB-UniRule"/>
</dbReference>
<dbReference type="FunFam" id="1.10.3370.10:FF:000001">
    <property type="entry name" value="Preprotein translocase subunit SecY"/>
    <property type="match status" value="1"/>
</dbReference>
<dbReference type="Gene3D" id="1.10.3370.10">
    <property type="entry name" value="SecY subunit domain"/>
    <property type="match status" value="1"/>
</dbReference>
<dbReference type="HAMAP" id="MF_01465">
    <property type="entry name" value="SecY"/>
    <property type="match status" value="1"/>
</dbReference>
<dbReference type="InterPro" id="IPR026593">
    <property type="entry name" value="SecY"/>
</dbReference>
<dbReference type="InterPro" id="IPR002208">
    <property type="entry name" value="SecY/SEC61-alpha"/>
</dbReference>
<dbReference type="InterPro" id="IPR030659">
    <property type="entry name" value="SecY_CS"/>
</dbReference>
<dbReference type="InterPro" id="IPR023201">
    <property type="entry name" value="SecY_dom_sf"/>
</dbReference>
<dbReference type="NCBIfam" id="TIGR00967">
    <property type="entry name" value="3a0501s007"/>
    <property type="match status" value="1"/>
</dbReference>
<dbReference type="PANTHER" id="PTHR10906">
    <property type="entry name" value="SECY/SEC61-ALPHA FAMILY MEMBER"/>
    <property type="match status" value="1"/>
</dbReference>
<dbReference type="Pfam" id="PF00344">
    <property type="entry name" value="SecY"/>
    <property type="match status" value="1"/>
</dbReference>
<dbReference type="PIRSF" id="PIRSF004557">
    <property type="entry name" value="SecY"/>
    <property type="match status" value="1"/>
</dbReference>
<dbReference type="PRINTS" id="PR00303">
    <property type="entry name" value="SECYTRNLCASE"/>
</dbReference>
<dbReference type="SUPFAM" id="SSF103491">
    <property type="entry name" value="Preprotein translocase SecY subunit"/>
    <property type="match status" value="1"/>
</dbReference>
<dbReference type="PROSITE" id="PS00755">
    <property type="entry name" value="SECY_1"/>
    <property type="match status" value="1"/>
</dbReference>
<dbReference type="PROSITE" id="PS00756">
    <property type="entry name" value="SECY_2"/>
    <property type="match status" value="1"/>
</dbReference>
<evidence type="ECO:0000250" key="1"/>
<evidence type="ECO:0000255" key="2"/>
<evidence type="ECO:0000305" key="3"/>
<organism>
    <name type="scientific">Guillardia theta</name>
    <name type="common">Cryptophyte</name>
    <name type="synonym">Cryptomonas phi</name>
    <dbReference type="NCBI Taxonomy" id="55529"/>
    <lineage>
        <taxon>Eukaryota</taxon>
        <taxon>Cryptophyceae</taxon>
        <taxon>Pyrenomonadales</taxon>
        <taxon>Geminigeraceae</taxon>
        <taxon>Guillardia</taxon>
    </lineage>
</organism>
<geneLocation type="chloroplast"/>
<protein>
    <recommendedName>
        <fullName>Protein translocase subunit SecY</fullName>
    </recommendedName>
</protein>
<gene>
    <name type="primary">secY</name>
</gene>
<sequence>MNTSIKSIKKQDLKDRIVFTLFLIVMSRLGTFLPIPGVDHDAFYQSIISNPLVNFLNVFSGGGFASIGVFALGIVPYINASIIVQLATNSIPSLEKLQKEEGELGRQKIVQLTRYVALVWALIQSIGVSFWVRPYVFNWDLNFVFAMSLTLTIGSMLIMWFSEQITEKGIGNGPSLLIFINIISGLPKLLQSQIQSTRLNIQALDIFVLVFIFSVMIIGIIFIQEGIKRIPIISARQLGKGQMDNKTSYLPLKLNQSGVMPIIFASAVLVLPAYLAQLVSNEQLRTVLHLFDGTSNNKLLYLLFYFTLILFFSYFYTSLILNPNDVSKNLKKMESSIYGVRPGKATTEYLQKTLNRLTFLGALFLAFIAIVPNIIETLTNLSVFKGLGGTSLLIIVGVQVDTSKQIQTYLISKNYETIVR</sequence>
<keyword id="KW-0150">Chloroplast</keyword>
<keyword id="KW-0472">Membrane</keyword>
<keyword id="KW-0934">Plastid</keyword>
<keyword id="KW-0653">Protein transport</keyword>
<keyword id="KW-0793">Thylakoid</keyword>
<keyword id="KW-0811">Translocation</keyword>
<keyword id="KW-0812">Transmembrane</keyword>
<keyword id="KW-1133">Transmembrane helix</keyword>
<keyword id="KW-0813">Transport</keyword>